<sequence>MLCVGRLGGLGARAAALPPRRAGRGILEAGIRARRVSTSWSPVGAAFNVKPQGSRLDLFGERRGLFGVPELSAPEGFHAAQEKALRKAELLVGRACSTPPGPQTVLIFDELSDSLCRVADLADFVKIAHPEPAFREAAEEACRSIGTMVEKLNTNVDLYQSLRKLLADKKLVDSLDPETRRVAELFMFDFEISGIHLDKEKRKRAVDLNVKILDLSSTFLMGANFPNKIEKHLLPEHIRRNFTSAGDHIIIDGLHAESPDDLVREAAYKIFLYPNAGQLKCLEELLSSRDLLAKLVGYSTFSHRALQGTIAKNPETVMQFLEKLSDKLSERTLKDFEMIRGMKMKLNPQNSEVMPWDPPYYSGVIRAERYNIEPSLYCPFFSLGACMEGLNILLNRLLGISLYAEQPAKGEVWSEDVRKLAVVHESEGLLGYIYCDFFQRADKPHQDCHFTIRGGRLKEDGDYQLPVVVLMLNLPRSSRSSPTLLTPGMMENLFHEMGHAMHSMLGRTRYQHVTGTRCPTDFAEVPSILMEYFANDYRVVNQFARHYQTGQPLPKNMVSRLCESKKVCAAADMQLQVFYATLDQIYHGKHPLRNSTTDILKETQEKFYGLPYVPDTAWQLRFSHLVGYGAKYYSYLMSRAVASMVWKECFLQDPFNRAAGERYRREMLAHGGGREPMLMVEGMLQKCPSVDDFVSALVSDLDLDFETFLMDSE</sequence>
<evidence type="ECO:0000250" key="1"/>
<evidence type="ECO:0000250" key="2">
    <source>
        <dbReference type="UniProtKB" id="Q99797"/>
    </source>
</evidence>
<evidence type="ECO:0000255" key="3">
    <source>
        <dbReference type="PROSITE-ProRule" id="PRU10095"/>
    </source>
</evidence>
<evidence type="ECO:0000305" key="4"/>
<gene>
    <name type="primary">MIPEP</name>
</gene>
<name>MIPEP_PONAB</name>
<organism>
    <name type="scientific">Pongo abelii</name>
    <name type="common">Sumatran orangutan</name>
    <name type="synonym">Pongo pygmaeus abelii</name>
    <dbReference type="NCBI Taxonomy" id="9601"/>
    <lineage>
        <taxon>Eukaryota</taxon>
        <taxon>Metazoa</taxon>
        <taxon>Chordata</taxon>
        <taxon>Craniata</taxon>
        <taxon>Vertebrata</taxon>
        <taxon>Euteleostomi</taxon>
        <taxon>Mammalia</taxon>
        <taxon>Eutheria</taxon>
        <taxon>Euarchontoglires</taxon>
        <taxon>Primates</taxon>
        <taxon>Haplorrhini</taxon>
        <taxon>Catarrhini</taxon>
        <taxon>Hominidae</taxon>
        <taxon>Pongo</taxon>
    </lineage>
</organism>
<dbReference type="EC" id="3.4.24.59"/>
<dbReference type="EMBL" id="CR857347">
    <property type="protein sequence ID" value="CAH89643.1"/>
    <property type="molecule type" value="mRNA"/>
</dbReference>
<dbReference type="RefSeq" id="NP_001124737.1">
    <property type="nucleotide sequence ID" value="NM_001131265.2"/>
</dbReference>
<dbReference type="SMR" id="Q5RF14"/>
<dbReference type="FunCoup" id="Q5RF14">
    <property type="interactions" value="1805"/>
</dbReference>
<dbReference type="STRING" id="9601.ENSPPYP00000005932"/>
<dbReference type="GeneID" id="100171586"/>
<dbReference type="KEGG" id="pon:100171586"/>
<dbReference type="CTD" id="4285"/>
<dbReference type="eggNOG" id="KOG2090">
    <property type="taxonomic scope" value="Eukaryota"/>
</dbReference>
<dbReference type="InParanoid" id="Q5RF14"/>
<dbReference type="OrthoDB" id="17530at2759"/>
<dbReference type="Proteomes" id="UP000001595">
    <property type="component" value="Unplaced"/>
</dbReference>
<dbReference type="GO" id="GO:0005759">
    <property type="term" value="C:mitochondrial matrix"/>
    <property type="evidence" value="ECO:0007669"/>
    <property type="project" value="UniProtKB-SubCell"/>
</dbReference>
<dbReference type="GO" id="GO:0046872">
    <property type="term" value="F:metal ion binding"/>
    <property type="evidence" value="ECO:0007669"/>
    <property type="project" value="UniProtKB-KW"/>
</dbReference>
<dbReference type="GO" id="GO:0004222">
    <property type="term" value="F:metalloendopeptidase activity"/>
    <property type="evidence" value="ECO:0007669"/>
    <property type="project" value="UniProtKB-EC"/>
</dbReference>
<dbReference type="GO" id="GO:0006518">
    <property type="term" value="P:peptide metabolic process"/>
    <property type="evidence" value="ECO:0007669"/>
    <property type="project" value="TreeGrafter"/>
</dbReference>
<dbReference type="GO" id="GO:0006627">
    <property type="term" value="P:protein processing involved in protein targeting to mitochondrion"/>
    <property type="evidence" value="ECO:0007669"/>
    <property type="project" value="TreeGrafter"/>
</dbReference>
<dbReference type="CDD" id="cd06457">
    <property type="entry name" value="M3A_MIP"/>
    <property type="match status" value="1"/>
</dbReference>
<dbReference type="FunFam" id="1.10.1370.40:FF:000002">
    <property type="entry name" value="Mitochondrial intermediate peptidase"/>
    <property type="match status" value="1"/>
</dbReference>
<dbReference type="FunFam" id="3.40.390.10:FF:000013">
    <property type="entry name" value="Mitochondrial intermediate peptidase"/>
    <property type="match status" value="1"/>
</dbReference>
<dbReference type="FunFam" id="1.10.1370.10:FF:000026">
    <property type="entry name" value="Si:ch73-1a9.4"/>
    <property type="match status" value="1"/>
</dbReference>
<dbReference type="Gene3D" id="1.10.1370.40">
    <property type="match status" value="1"/>
</dbReference>
<dbReference type="Gene3D" id="3.40.390.10">
    <property type="entry name" value="Collagenase (Catalytic Domain)"/>
    <property type="match status" value="1"/>
</dbReference>
<dbReference type="Gene3D" id="1.10.1370.10">
    <property type="entry name" value="Neurolysin, domain 3"/>
    <property type="match status" value="1"/>
</dbReference>
<dbReference type="InterPro" id="IPR033851">
    <property type="entry name" value="M3A_MIP"/>
</dbReference>
<dbReference type="InterPro" id="IPR024079">
    <property type="entry name" value="MetalloPept_cat_dom_sf"/>
</dbReference>
<dbReference type="InterPro" id="IPR024077">
    <property type="entry name" value="Neurolysin/TOP_dom2"/>
</dbReference>
<dbReference type="InterPro" id="IPR045090">
    <property type="entry name" value="Pept_M3A_M3B"/>
</dbReference>
<dbReference type="InterPro" id="IPR001567">
    <property type="entry name" value="Pept_M3A_M3B_dom"/>
</dbReference>
<dbReference type="PANTHER" id="PTHR11804:SF79">
    <property type="entry name" value="MITOCHONDRIAL INTERMEDIATE PEPTIDASE"/>
    <property type="match status" value="1"/>
</dbReference>
<dbReference type="PANTHER" id="PTHR11804">
    <property type="entry name" value="PROTEASE M3 THIMET OLIGOPEPTIDASE-RELATED"/>
    <property type="match status" value="1"/>
</dbReference>
<dbReference type="Pfam" id="PF01432">
    <property type="entry name" value="Peptidase_M3"/>
    <property type="match status" value="1"/>
</dbReference>
<dbReference type="SUPFAM" id="SSF55486">
    <property type="entry name" value="Metalloproteases ('zincins'), catalytic domain"/>
    <property type="match status" value="1"/>
</dbReference>
<dbReference type="PROSITE" id="PS00142">
    <property type="entry name" value="ZINC_PROTEASE"/>
    <property type="match status" value="1"/>
</dbReference>
<accession>Q5RF14</accession>
<comment type="function">
    <text evidence="1">Cleaves proteins, imported into the mitochondrion, to their mature size.</text>
</comment>
<comment type="catalytic activity">
    <reaction>
        <text>Release of an N-terminal octapeptide as second stage of processing of some proteins imported into the mitochondrion.</text>
        <dbReference type="EC" id="3.4.24.59"/>
    </reaction>
</comment>
<comment type="cofactor">
    <cofactor evidence="1">
        <name>Zn(2+)</name>
        <dbReference type="ChEBI" id="CHEBI:29105"/>
    </cofactor>
    <text evidence="1">Binds 1 zinc ion.</text>
</comment>
<comment type="activity regulation">
    <text evidence="1">Activity is divalent cation-dependent. It is stimulated by manganese, magnesium or calcium ions and reversibly inhibited by zinc, cobalt and iron (By similarity).</text>
</comment>
<comment type="subunit">
    <text evidence="1">Monomer.</text>
</comment>
<comment type="subcellular location">
    <subcellularLocation>
        <location evidence="1">Mitochondrion matrix</location>
    </subcellularLocation>
</comment>
<comment type="similarity">
    <text evidence="4">Belongs to the peptidase M3 family.</text>
</comment>
<keyword id="KW-0007">Acetylation</keyword>
<keyword id="KW-0106">Calcium</keyword>
<keyword id="KW-0170">Cobalt</keyword>
<keyword id="KW-0378">Hydrolase</keyword>
<keyword id="KW-0408">Iron</keyword>
<keyword id="KW-0460">Magnesium</keyword>
<keyword id="KW-0464">Manganese</keyword>
<keyword id="KW-0479">Metal-binding</keyword>
<keyword id="KW-0482">Metalloprotease</keyword>
<keyword id="KW-0496">Mitochondrion</keyword>
<keyword id="KW-0645">Protease</keyword>
<keyword id="KW-1185">Reference proteome</keyword>
<keyword id="KW-0809">Transit peptide</keyword>
<keyword id="KW-0862">Zinc</keyword>
<reference key="1">
    <citation type="submission" date="2004-11" db="EMBL/GenBank/DDBJ databases">
        <authorList>
            <consortium name="The German cDNA consortium"/>
        </authorList>
    </citation>
    <scope>NUCLEOTIDE SEQUENCE [LARGE SCALE MRNA]</scope>
    <source>
        <tissue>Kidney</tissue>
    </source>
</reference>
<feature type="transit peptide" description="Mitochondrion" evidence="1">
    <location>
        <begin position="1"/>
        <end position="35"/>
    </location>
</feature>
<feature type="chain" id="PRO_0000319049" description="Mitochondrial intermediate peptidase">
    <location>
        <begin position="36"/>
        <end position="713"/>
    </location>
</feature>
<feature type="active site" evidence="3">
    <location>
        <position position="496"/>
    </location>
</feature>
<feature type="binding site" evidence="3">
    <location>
        <position position="495"/>
    </location>
    <ligand>
        <name>Zn(2+)</name>
        <dbReference type="ChEBI" id="CHEBI:29105"/>
        <note>catalytic</note>
    </ligand>
</feature>
<feature type="binding site" evidence="3">
    <location>
        <position position="499"/>
    </location>
    <ligand>
        <name>Zn(2+)</name>
        <dbReference type="ChEBI" id="CHEBI:29105"/>
        <note>catalytic</note>
    </ligand>
</feature>
<feature type="binding site" evidence="3">
    <location>
        <position position="502"/>
    </location>
    <ligand>
        <name>Zn(2+)</name>
        <dbReference type="ChEBI" id="CHEBI:29105"/>
        <note>catalytic</note>
    </ligand>
</feature>
<feature type="modified residue" description="N6-acetyllysine" evidence="2">
    <location>
        <position position="126"/>
    </location>
</feature>
<proteinExistence type="evidence at transcript level"/>
<protein>
    <recommendedName>
        <fullName>Mitochondrial intermediate peptidase</fullName>
        <shortName>MIP</shortName>
        <ecNumber>3.4.24.59</ecNumber>
    </recommendedName>
</protein>